<organism>
    <name type="scientific">Schizosaccharomyces pombe (strain 972 / ATCC 24843)</name>
    <name type="common">Fission yeast</name>
    <dbReference type="NCBI Taxonomy" id="284812"/>
    <lineage>
        <taxon>Eukaryota</taxon>
        <taxon>Fungi</taxon>
        <taxon>Dikarya</taxon>
        <taxon>Ascomycota</taxon>
        <taxon>Taphrinomycotina</taxon>
        <taxon>Schizosaccharomycetes</taxon>
        <taxon>Schizosaccharomycetales</taxon>
        <taxon>Schizosaccharomycetaceae</taxon>
        <taxon>Schizosaccharomyces</taxon>
    </lineage>
</organism>
<proteinExistence type="evidence at protein level"/>
<comment type="function">
    <text evidence="2">The elongation of primed DNA templates by DNA polymerase delta and epsilon requires the action of the accessory proteins PCNA and activator 1.</text>
</comment>
<comment type="subunit">
    <text evidence="2">Heteropentamer of subunits rfc1, rfc2, rfc3, rfc4 and rfc5 that forms a complex (RFC) with PCNA in the presence of ATP. Two other complexes exist where rfc1 can be replaced by either ctf18 or elg1 to form the ctf18-RFC or the elg1-RFC complexes respectively.</text>
</comment>
<comment type="subcellular location">
    <subcellularLocation>
        <location evidence="1">Nucleus</location>
    </subcellularLocation>
</comment>
<comment type="similarity">
    <text evidence="3">Belongs to the activator 1 small subunits family.</text>
</comment>
<dbReference type="EMBL" id="CU329671">
    <property type="protein sequence ID" value="CAB36876.1"/>
    <property type="molecule type" value="Genomic_DNA"/>
</dbReference>
<dbReference type="PIR" id="T40703">
    <property type="entry name" value="T40703"/>
</dbReference>
<dbReference type="RefSeq" id="NP_595646.1">
    <property type="nucleotide sequence ID" value="NM_001021540.2"/>
</dbReference>
<dbReference type="SMR" id="O94697"/>
<dbReference type="BioGRID" id="276748">
    <property type="interactions" value="11"/>
</dbReference>
<dbReference type="ComplexPortal" id="CPX-546">
    <property type="entry name" value="DNA replication factor C complex"/>
</dbReference>
<dbReference type="FunCoup" id="O94697">
    <property type="interactions" value="607"/>
</dbReference>
<dbReference type="STRING" id="284812.O94697"/>
<dbReference type="PaxDb" id="4896-SPBC83.14c.1"/>
<dbReference type="EnsemblFungi" id="SPBC83.14c.1">
    <property type="protein sequence ID" value="SPBC83.14c.1:pep"/>
    <property type="gene ID" value="SPBC83.14c"/>
</dbReference>
<dbReference type="GeneID" id="2540215"/>
<dbReference type="KEGG" id="spo:2540215"/>
<dbReference type="PomBase" id="SPBC83.14c">
    <property type="gene designation" value="rfc5"/>
</dbReference>
<dbReference type="VEuPathDB" id="FungiDB:SPBC83.14c"/>
<dbReference type="eggNOG" id="KOG2035">
    <property type="taxonomic scope" value="Eukaryota"/>
</dbReference>
<dbReference type="HOGENOM" id="CLU_042324_5_0_1"/>
<dbReference type="InParanoid" id="O94697"/>
<dbReference type="OMA" id="LKADIMH"/>
<dbReference type="PhylomeDB" id="O94697"/>
<dbReference type="Reactome" id="R-SPO-110312">
    <property type="pathway name" value="Translesion synthesis by REV1"/>
</dbReference>
<dbReference type="Reactome" id="R-SPO-110314">
    <property type="pathway name" value="Recognition of DNA damage by PCNA-containing replication complex"/>
</dbReference>
<dbReference type="Reactome" id="R-SPO-110320">
    <property type="pathway name" value="Translesion Synthesis by POLH"/>
</dbReference>
<dbReference type="Reactome" id="R-SPO-176187">
    <property type="pathway name" value="Activation of ATR in response to replication stress"/>
</dbReference>
<dbReference type="Reactome" id="R-SPO-5651801">
    <property type="pathway name" value="PCNA-Dependent Long Patch Base Excision Repair"/>
</dbReference>
<dbReference type="Reactome" id="R-SPO-5655862">
    <property type="pathway name" value="Translesion synthesis by POLK"/>
</dbReference>
<dbReference type="Reactome" id="R-SPO-5656121">
    <property type="pathway name" value="Translesion synthesis by POLI"/>
</dbReference>
<dbReference type="Reactome" id="R-SPO-5656169">
    <property type="pathway name" value="Termination of translesion DNA synthesis"/>
</dbReference>
<dbReference type="Reactome" id="R-SPO-5696397">
    <property type="pathway name" value="Gap-filling DNA repair synthesis and ligation in GG-NER"/>
</dbReference>
<dbReference type="Reactome" id="R-SPO-5696400">
    <property type="pathway name" value="Dual Incision in GG-NER"/>
</dbReference>
<dbReference type="Reactome" id="R-SPO-6782135">
    <property type="pathway name" value="Dual incision in TC-NER"/>
</dbReference>
<dbReference type="Reactome" id="R-SPO-6782210">
    <property type="pathway name" value="Gap-filling DNA repair synthesis and ligation in TC-NER"/>
</dbReference>
<dbReference type="Reactome" id="R-SPO-69091">
    <property type="pathway name" value="Polymerase switching"/>
</dbReference>
<dbReference type="PRO" id="PR:O94697"/>
<dbReference type="Proteomes" id="UP000002485">
    <property type="component" value="Chromosome II"/>
</dbReference>
<dbReference type="GO" id="GO:0000785">
    <property type="term" value="C:chromatin"/>
    <property type="evidence" value="ECO:0000305"/>
    <property type="project" value="PomBase"/>
</dbReference>
<dbReference type="GO" id="GO:0031390">
    <property type="term" value="C:Ctf18 RFC-like complex"/>
    <property type="evidence" value="ECO:0000318"/>
    <property type="project" value="GO_Central"/>
</dbReference>
<dbReference type="GO" id="GO:0005829">
    <property type="term" value="C:cytosol"/>
    <property type="evidence" value="ECO:0007005"/>
    <property type="project" value="PomBase"/>
</dbReference>
<dbReference type="GO" id="GO:0005663">
    <property type="term" value="C:DNA replication factor C complex"/>
    <property type="evidence" value="ECO:0000318"/>
    <property type="project" value="GO_Central"/>
</dbReference>
<dbReference type="GO" id="GO:0031391">
    <property type="term" value="C:Elg1 RFC-like complex"/>
    <property type="evidence" value="ECO:0000314"/>
    <property type="project" value="PomBase"/>
</dbReference>
<dbReference type="GO" id="GO:0005634">
    <property type="term" value="C:nucleus"/>
    <property type="evidence" value="ECO:0007005"/>
    <property type="project" value="PomBase"/>
</dbReference>
<dbReference type="GO" id="GO:0031389">
    <property type="term" value="C:Rad17 RFC-like complex"/>
    <property type="evidence" value="ECO:0000318"/>
    <property type="project" value="GO_Central"/>
</dbReference>
<dbReference type="GO" id="GO:0016887">
    <property type="term" value="F:ATP hydrolysis activity"/>
    <property type="evidence" value="ECO:0000303"/>
    <property type="project" value="PomBase"/>
</dbReference>
<dbReference type="GO" id="GO:0003677">
    <property type="term" value="F:DNA binding"/>
    <property type="evidence" value="ECO:0007669"/>
    <property type="project" value="UniProtKB-KW"/>
</dbReference>
<dbReference type="GO" id="GO:0061860">
    <property type="term" value="F:DNA clamp unloader activity"/>
    <property type="evidence" value="ECO:0000305"/>
    <property type="project" value="PomBase"/>
</dbReference>
<dbReference type="GO" id="GO:0006281">
    <property type="term" value="P:DNA repair"/>
    <property type="evidence" value="ECO:0000318"/>
    <property type="project" value="GO_Central"/>
</dbReference>
<dbReference type="GO" id="GO:1902983">
    <property type="term" value="P:DNA strand elongation involved in mitotic DNA replication"/>
    <property type="evidence" value="ECO:0000314"/>
    <property type="project" value="PomBase"/>
</dbReference>
<dbReference type="GO" id="GO:0006261">
    <property type="term" value="P:DNA-templated DNA replication"/>
    <property type="evidence" value="ECO:0000318"/>
    <property type="project" value="GO_Central"/>
</dbReference>
<dbReference type="GO" id="GO:0070914">
    <property type="term" value="P:UV-damage excision repair"/>
    <property type="evidence" value="ECO:0000314"/>
    <property type="project" value="PomBase"/>
</dbReference>
<dbReference type="CDD" id="cd00009">
    <property type="entry name" value="AAA"/>
    <property type="match status" value="1"/>
</dbReference>
<dbReference type="FunFam" id="1.20.272.10:FF:000002">
    <property type="entry name" value="Replication factor C subunit 3"/>
    <property type="match status" value="1"/>
</dbReference>
<dbReference type="FunFam" id="1.10.8.60:FF:000030">
    <property type="entry name" value="replication factor C subunit 3"/>
    <property type="match status" value="1"/>
</dbReference>
<dbReference type="FunFam" id="3.40.50.300:FF:000136">
    <property type="entry name" value="Replication factor C subunit 5"/>
    <property type="match status" value="1"/>
</dbReference>
<dbReference type="Gene3D" id="1.10.8.60">
    <property type="match status" value="1"/>
</dbReference>
<dbReference type="Gene3D" id="1.20.272.10">
    <property type="match status" value="1"/>
</dbReference>
<dbReference type="Gene3D" id="3.40.50.300">
    <property type="entry name" value="P-loop containing nucleotide triphosphate hydrolases"/>
    <property type="match status" value="1"/>
</dbReference>
<dbReference type="InterPro" id="IPR008921">
    <property type="entry name" value="DNA_pol3_clamp-load_cplx_C"/>
</dbReference>
<dbReference type="InterPro" id="IPR050238">
    <property type="entry name" value="DNA_Rep/Repair_Clamp_Loader"/>
</dbReference>
<dbReference type="InterPro" id="IPR027417">
    <property type="entry name" value="P-loop_NTPase"/>
</dbReference>
<dbReference type="PANTHER" id="PTHR11669">
    <property type="entry name" value="REPLICATION FACTOR C / DNA POLYMERASE III GAMMA-TAU SUBUNIT"/>
    <property type="match status" value="1"/>
</dbReference>
<dbReference type="PANTHER" id="PTHR11669:SF1">
    <property type="entry name" value="REPLICATION FACTOR C SUBUNIT 3"/>
    <property type="match status" value="1"/>
</dbReference>
<dbReference type="Pfam" id="PF13177">
    <property type="entry name" value="DNA_pol3_delta2"/>
    <property type="match status" value="1"/>
</dbReference>
<dbReference type="Pfam" id="PF21960">
    <property type="entry name" value="RCF1-5-like_lid"/>
    <property type="match status" value="1"/>
</dbReference>
<dbReference type="Pfam" id="PF22534">
    <property type="entry name" value="RFC_C"/>
    <property type="match status" value="1"/>
</dbReference>
<dbReference type="SUPFAM" id="SSF52540">
    <property type="entry name" value="P-loop containing nucleoside triphosphate hydrolases"/>
    <property type="match status" value="1"/>
</dbReference>
<dbReference type="SUPFAM" id="SSF48019">
    <property type="entry name" value="post-AAA+ oligomerization domain-like"/>
    <property type="match status" value="1"/>
</dbReference>
<feature type="chain" id="PRO_0000121764" description="Replication factor C subunit 5">
    <location>
        <begin position="1"/>
        <end position="358"/>
    </location>
</feature>
<sequence length="358" mass="40403">MLWLDQYRPKTLASLDYHKQLSERLISLSSTNEFPHLLVYGPSGAGKKTRVVAILRELYGPGSEKLKIDQRTFLTPSSKKLQINIVSSLHHLEITPSDVGNYDRVIMQELLKDVAQSAQVDLQAKKIFKVVVINVADELTRDAQAALRRTMEKYSNNIRLILIANSTSKIIEPIRSRTLMVRVAAPTPEEIILVMSKILTAQGLEAPDSLLNNIANNCDRNLRKAILLLETVHAKSPGNKQLIDTGAQLPLPDWQTFIQQVGDSMLQEQSPARILAVRSMLYDLLSHCIPPTTILKELLSFFLSKVDTKLHPYLIQAAANYEHRTRMGNKSIFHLEAFVAYFMKVYAMLQLGMELPSY</sequence>
<keyword id="KW-0903">Direct protein sequencing</keyword>
<keyword id="KW-0235">DNA replication</keyword>
<keyword id="KW-0238">DNA-binding</keyword>
<keyword id="KW-0539">Nucleus</keyword>
<keyword id="KW-1185">Reference proteome</keyword>
<reference key="1">
    <citation type="journal article" date="2002" name="Nature">
        <title>The genome sequence of Schizosaccharomyces pombe.</title>
        <authorList>
            <person name="Wood V."/>
            <person name="Gwilliam R."/>
            <person name="Rajandream M.A."/>
            <person name="Lyne M.H."/>
            <person name="Lyne R."/>
            <person name="Stewart A."/>
            <person name="Sgouros J.G."/>
            <person name="Peat N."/>
            <person name="Hayles J."/>
            <person name="Baker S.G."/>
            <person name="Basham D."/>
            <person name="Bowman S."/>
            <person name="Brooks K."/>
            <person name="Brown D."/>
            <person name="Brown S."/>
            <person name="Chillingworth T."/>
            <person name="Churcher C.M."/>
            <person name="Collins M."/>
            <person name="Connor R."/>
            <person name="Cronin A."/>
            <person name="Davis P."/>
            <person name="Feltwell T."/>
            <person name="Fraser A."/>
            <person name="Gentles S."/>
            <person name="Goble A."/>
            <person name="Hamlin N."/>
            <person name="Harris D.E."/>
            <person name="Hidalgo J."/>
            <person name="Hodgson G."/>
            <person name="Holroyd S."/>
            <person name="Hornsby T."/>
            <person name="Howarth S."/>
            <person name="Huckle E.J."/>
            <person name="Hunt S."/>
            <person name="Jagels K."/>
            <person name="James K.D."/>
            <person name="Jones L."/>
            <person name="Jones M."/>
            <person name="Leather S."/>
            <person name="McDonald S."/>
            <person name="McLean J."/>
            <person name="Mooney P."/>
            <person name="Moule S."/>
            <person name="Mungall K.L."/>
            <person name="Murphy L.D."/>
            <person name="Niblett D."/>
            <person name="Odell C."/>
            <person name="Oliver K."/>
            <person name="O'Neil S."/>
            <person name="Pearson D."/>
            <person name="Quail M.A."/>
            <person name="Rabbinowitsch E."/>
            <person name="Rutherford K.M."/>
            <person name="Rutter S."/>
            <person name="Saunders D."/>
            <person name="Seeger K."/>
            <person name="Sharp S."/>
            <person name="Skelton J."/>
            <person name="Simmonds M.N."/>
            <person name="Squares R."/>
            <person name="Squares S."/>
            <person name="Stevens K."/>
            <person name="Taylor K."/>
            <person name="Taylor R.G."/>
            <person name="Tivey A."/>
            <person name="Walsh S.V."/>
            <person name="Warren T."/>
            <person name="Whitehead S."/>
            <person name="Woodward J.R."/>
            <person name="Volckaert G."/>
            <person name="Aert R."/>
            <person name="Robben J."/>
            <person name="Grymonprez B."/>
            <person name="Weltjens I."/>
            <person name="Vanstreels E."/>
            <person name="Rieger M."/>
            <person name="Schaefer M."/>
            <person name="Mueller-Auer S."/>
            <person name="Gabel C."/>
            <person name="Fuchs M."/>
            <person name="Duesterhoeft A."/>
            <person name="Fritzc C."/>
            <person name="Holzer E."/>
            <person name="Moestl D."/>
            <person name="Hilbert H."/>
            <person name="Borzym K."/>
            <person name="Langer I."/>
            <person name="Beck A."/>
            <person name="Lehrach H."/>
            <person name="Reinhardt R."/>
            <person name="Pohl T.M."/>
            <person name="Eger P."/>
            <person name="Zimmermann W."/>
            <person name="Wedler H."/>
            <person name="Wambutt R."/>
            <person name="Purnelle B."/>
            <person name="Goffeau A."/>
            <person name="Cadieu E."/>
            <person name="Dreano S."/>
            <person name="Gloux S."/>
            <person name="Lelaure V."/>
            <person name="Mottier S."/>
            <person name="Galibert F."/>
            <person name="Aves S.J."/>
            <person name="Xiang Z."/>
            <person name="Hunt C."/>
            <person name="Moore K."/>
            <person name="Hurst S.M."/>
            <person name="Lucas M."/>
            <person name="Rochet M."/>
            <person name="Gaillardin C."/>
            <person name="Tallada V.A."/>
            <person name="Garzon A."/>
            <person name="Thode G."/>
            <person name="Daga R.R."/>
            <person name="Cruzado L."/>
            <person name="Jimenez J."/>
            <person name="Sanchez M."/>
            <person name="del Rey F."/>
            <person name="Benito J."/>
            <person name="Dominguez A."/>
            <person name="Revuelta J.L."/>
            <person name="Moreno S."/>
            <person name="Armstrong J."/>
            <person name="Forsburg S.L."/>
            <person name="Cerutti L."/>
            <person name="Lowe T."/>
            <person name="McCombie W.R."/>
            <person name="Paulsen I."/>
            <person name="Potashkin J."/>
            <person name="Shpakovski G.V."/>
            <person name="Ussery D."/>
            <person name="Barrell B.G."/>
            <person name="Nurse P."/>
        </authorList>
    </citation>
    <scope>NUCLEOTIDE SEQUENCE [LARGE SCALE GENOMIC DNA]</scope>
    <source>
        <strain>972 / ATCC 24843</strain>
    </source>
</reference>
<reference key="2">
    <citation type="journal article" date="2005" name="Nucleic Acids Res.">
        <title>Contrasting effects of Elg1-RFC and Ctf18-RFC inactivation in the absence of fully functional RFC in fission yeast.</title>
        <authorList>
            <person name="Kim J."/>
            <person name="Robertson K."/>
            <person name="Mylonas K.J.L."/>
            <person name="Gray F.C."/>
            <person name="Charapitsa I."/>
            <person name="MacNeill S.A."/>
        </authorList>
    </citation>
    <scope>PROTEIN SEQUENCE OF 1-10; 25-47; 80-126; 130-141; 183-220; 241-273 AND 310-324</scope>
    <scope>FUNCTION</scope>
    <scope>SUBUNIT</scope>
</reference>
<protein>
    <recommendedName>
        <fullName>Replication factor C subunit 5</fullName>
        <shortName>Replication factor C5</shortName>
    </recommendedName>
</protein>
<evidence type="ECO:0000250" key="1"/>
<evidence type="ECO:0000269" key="2">
    <source>
    </source>
</evidence>
<evidence type="ECO:0000305" key="3"/>
<name>RFC5_SCHPO</name>
<accession>O94697</accession>
<gene>
    <name type="primary">rfc5</name>
    <name type="ORF">SPBC83.14c</name>
</gene>